<gene>
    <name type="primary">parB</name>
    <name type="ordered locus">ML2706</name>
</gene>
<reference key="1">
    <citation type="journal article" date="1996" name="Microbiology">
        <title>Gene arrangement and organization in an approximately 76 kb fragment encompassing the oriC region of the chromosome of Mycobacterium leprae.</title>
        <authorList>
            <person name="Fsihi H."/>
            <person name="de Rossi E."/>
            <person name="Salazar L."/>
            <person name="Cantoni R."/>
            <person name="Labo M."/>
            <person name="Riccardi G."/>
            <person name="Takiff H.E."/>
            <person name="Eiglmeier K."/>
            <person name="Bergh S."/>
            <person name="Cole S.T."/>
        </authorList>
    </citation>
    <scope>NUCLEOTIDE SEQUENCE [GENOMIC DNA]</scope>
</reference>
<reference key="2">
    <citation type="journal article" date="2001" name="Nature">
        <title>Massive gene decay in the leprosy bacillus.</title>
        <authorList>
            <person name="Cole S.T."/>
            <person name="Eiglmeier K."/>
            <person name="Parkhill J."/>
            <person name="James K.D."/>
            <person name="Thomson N.R."/>
            <person name="Wheeler P.R."/>
            <person name="Honore N."/>
            <person name="Garnier T."/>
            <person name="Churcher C.M."/>
            <person name="Harris D.E."/>
            <person name="Mungall K.L."/>
            <person name="Basham D."/>
            <person name="Brown D."/>
            <person name="Chillingworth T."/>
            <person name="Connor R."/>
            <person name="Davies R.M."/>
            <person name="Devlin K."/>
            <person name="Duthoy S."/>
            <person name="Feltwell T."/>
            <person name="Fraser A."/>
            <person name="Hamlin N."/>
            <person name="Holroyd S."/>
            <person name="Hornsby T."/>
            <person name="Jagels K."/>
            <person name="Lacroix C."/>
            <person name="Maclean J."/>
            <person name="Moule S."/>
            <person name="Murphy L.D."/>
            <person name="Oliver K."/>
            <person name="Quail M.A."/>
            <person name="Rajandream M.A."/>
            <person name="Rutherford K.M."/>
            <person name="Rutter S."/>
            <person name="Seeger K."/>
            <person name="Simon S."/>
            <person name="Simmonds M."/>
            <person name="Skelton J."/>
            <person name="Squares R."/>
            <person name="Squares S."/>
            <person name="Stevens K."/>
            <person name="Taylor K."/>
            <person name="Whitehead S."/>
            <person name="Woodward J.R."/>
            <person name="Barrell B.G."/>
        </authorList>
    </citation>
    <scope>NUCLEOTIDE SEQUENCE [LARGE SCALE GENOMIC DNA]</scope>
    <source>
        <strain>TN</strain>
    </source>
</reference>
<feature type="chain" id="PRO_0000178684" description="Probable chromosome-partitioning protein ParB">
    <location>
        <begin position="1"/>
        <end position="333"/>
    </location>
</feature>
<name>PARB_MYCLE</name>
<protein>
    <recommendedName>
        <fullName>Probable chromosome-partitioning protein ParB</fullName>
    </recommendedName>
</protein>
<comment type="function">
    <text evidence="1">Involved in chromosome partition. Localize to both poles of the predivisional cell following completion of DNA replication. Binds to the DNA origin of replication (By similarity).</text>
</comment>
<comment type="similarity">
    <text evidence="2">Belongs to the ParB family.</text>
</comment>
<comment type="sequence caution" evidence="2">
    <conflict type="erroneous initiation">
        <sequence resource="EMBL-CDS" id="CAC32238"/>
    </conflict>
</comment>
<evidence type="ECO:0000250" key="1"/>
<evidence type="ECO:0000305" key="2"/>
<sequence length="333" mass="36351">MTQSLCKKGGLGRGLASLIPTGPVDADSGPATYGPQMGNTAADVLIGGSAQKDNAMGAVYREIALSDITENPCQPRQVFDDEAMSELVHSIREFGLLQPIVVRPASGSCGDTRYQIVMGERRWRAAQQAGLSFIPAIVRATGDDSMLRDALLENIHRVQLNPLEEAAAYQQLLDEFEVTHDELASRIGRSRPLITNMIRLLKLPIPVQRRVAAGVLSAGHARALLSLEANPEVQEELASRIIAEGLSVRATEEAVKLANHEVNRVNREVITPVPQRRKPICMPGLQDVAERLSNAFDTRVMVSLGKRKGKIVVEFSSVDDLQRIVDVMTTYKT</sequence>
<proteinExistence type="inferred from homology"/>
<keyword id="KW-0159">Chromosome partition</keyword>
<keyword id="KW-0238">DNA-binding</keyword>
<keyword id="KW-1185">Reference proteome</keyword>
<organism>
    <name type="scientific">Mycobacterium leprae (strain TN)</name>
    <dbReference type="NCBI Taxonomy" id="272631"/>
    <lineage>
        <taxon>Bacteria</taxon>
        <taxon>Bacillati</taxon>
        <taxon>Actinomycetota</taxon>
        <taxon>Actinomycetes</taxon>
        <taxon>Mycobacteriales</taxon>
        <taxon>Mycobacteriaceae</taxon>
        <taxon>Mycobacterium</taxon>
    </lineage>
</organism>
<dbReference type="EMBL" id="L39923">
    <property type="protein sequence ID" value="AAB53134.1"/>
    <property type="molecule type" value="Genomic_DNA"/>
</dbReference>
<dbReference type="EMBL" id="AL583926">
    <property type="protein sequence ID" value="CAC32238.1"/>
    <property type="status" value="ALT_INIT"/>
    <property type="molecule type" value="Genomic_DNA"/>
</dbReference>
<dbReference type="PIR" id="H87247">
    <property type="entry name" value="H87247"/>
</dbReference>
<dbReference type="RefSeq" id="WP_041323610.1">
    <property type="nucleotide sequence ID" value="NC_002677.1"/>
</dbReference>
<dbReference type="SMR" id="Q50201"/>
<dbReference type="STRING" id="272631.gene:17576572"/>
<dbReference type="KEGG" id="mle:ML2706"/>
<dbReference type="Leproma" id="ML2706"/>
<dbReference type="eggNOG" id="COG1475">
    <property type="taxonomic scope" value="Bacteria"/>
</dbReference>
<dbReference type="HOGENOM" id="CLU_023853_0_0_11"/>
<dbReference type="Proteomes" id="UP000000806">
    <property type="component" value="Chromosome"/>
</dbReference>
<dbReference type="GO" id="GO:0005694">
    <property type="term" value="C:chromosome"/>
    <property type="evidence" value="ECO:0007669"/>
    <property type="project" value="TreeGrafter"/>
</dbReference>
<dbReference type="GO" id="GO:0003677">
    <property type="term" value="F:DNA binding"/>
    <property type="evidence" value="ECO:0007669"/>
    <property type="project" value="UniProtKB-KW"/>
</dbReference>
<dbReference type="GO" id="GO:0007059">
    <property type="term" value="P:chromosome segregation"/>
    <property type="evidence" value="ECO:0007669"/>
    <property type="project" value="UniProtKB-KW"/>
</dbReference>
<dbReference type="GO" id="GO:0045881">
    <property type="term" value="P:positive regulation of sporulation resulting in formation of a cellular spore"/>
    <property type="evidence" value="ECO:0007669"/>
    <property type="project" value="TreeGrafter"/>
</dbReference>
<dbReference type="CDD" id="cd16393">
    <property type="entry name" value="SPO0J_N"/>
    <property type="match status" value="1"/>
</dbReference>
<dbReference type="FunFam" id="1.10.10.2830:FF:000001">
    <property type="entry name" value="Chromosome partitioning protein ParB"/>
    <property type="match status" value="1"/>
</dbReference>
<dbReference type="FunFam" id="3.90.1530.30:FF:000001">
    <property type="entry name" value="Chromosome partitioning protein ParB"/>
    <property type="match status" value="1"/>
</dbReference>
<dbReference type="Gene3D" id="1.10.10.2830">
    <property type="match status" value="1"/>
</dbReference>
<dbReference type="Gene3D" id="3.90.1530.30">
    <property type="match status" value="1"/>
</dbReference>
<dbReference type="InterPro" id="IPR050336">
    <property type="entry name" value="Chromosome_partition/occlusion"/>
</dbReference>
<dbReference type="InterPro" id="IPR041468">
    <property type="entry name" value="HTH_ParB/Spo0J"/>
</dbReference>
<dbReference type="InterPro" id="IPR004437">
    <property type="entry name" value="ParB/RepB/Spo0J"/>
</dbReference>
<dbReference type="InterPro" id="IPR003115">
    <property type="entry name" value="ParB/Sulfiredoxin_dom"/>
</dbReference>
<dbReference type="InterPro" id="IPR036086">
    <property type="entry name" value="ParB/Sulfiredoxin_sf"/>
</dbReference>
<dbReference type="InterPro" id="IPR057240">
    <property type="entry name" value="ParB_dimer_C"/>
</dbReference>
<dbReference type="NCBIfam" id="TIGR00180">
    <property type="entry name" value="parB_part"/>
    <property type="match status" value="1"/>
</dbReference>
<dbReference type="PANTHER" id="PTHR33375">
    <property type="entry name" value="CHROMOSOME-PARTITIONING PROTEIN PARB-RELATED"/>
    <property type="match status" value="1"/>
</dbReference>
<dbReference type="PANTHER" id="PTHR33375:SF1">
    <property type="entry name" value="CHROMOSOME-PARTITIONING PROTEIN PARB-RELATED"/>
    <property type="match status" value="1"/>
</dbReference>
<dbReference type="Pfam" id="PF17762">
    <property type="entry name" value="HTH_ParB"/>
    <property type="match status" value="1"/>
</dbReference>
<dbReference type="Pfam" id="PF23552">
    <property type="entry name" value="ParB_dimer"/>
    <property type="match status" value="1"/>
</dbReference>
<dbReference type="Pfam" id="PF02195">
    <property type="entry name" value="ParBc"/>
    <property type="match status" value="1"/>
</dbReference>
<dbReference type="SMART" id="SM00470">
    <property type="entry name" value="ParB"/>
    <property type="match status" value="1"/>
</dbReference>
<dbReference type="SUPFAM" id="SSF109709">
    <property type="entry name" value="KorB DNA-binding domain-like"/>
    <property type="match status" value="1"/>
</dbReference>
<dbReference type="SUPFAM" id="SSF110849">
    <property type="entry name" value="ParB/Sulfiredoxin"/>
    <property type="match status" value="1"/>
</dbReference>
<accession>Q50201</accession>